<evidence type="ECO:0000255" key="1">
    <source>
        <dbReference type="HAMAP-Rule" id="MF_00097"/>
    </source>
</evidence>
<comment type="function">
    <text evidence="1">Condenses 4-methyl-5-(beta-hydroxyethyl)thiazole monophosphate (THZ-P) and 2-methyl-4-amino-5-hydroxymethyl pyrimidine pyrophosphate (HMP-PP) to form thiamine monophosphate (TMP).</text>
</comment>
<comment type="catalytic activity">
    <reaction evidence="1">
        <text>2-[(2R,5Z)-2-carboxy-4-methylthiazol-5(2H)-ylidene]ethyl phosphate + 4-amino-2-methyl-5-(diphosphooxymethyl)pyrimidine + 2 H(+) = thiamine phosphate + CO2 + diphosphate</text>
        <dbReference type="Rhea" id="RHEA:47844"/>
        <dbReference type="ChEBI" id="CHEBI:15378"/>
        <dbReference type="ChEBI" id="CHEBI:16526"/>
        <dbReference type="ChEBI" id="CHEBI:33019"/>
        <dbReference type="ChEBI" id="CHEBI:37575"/>
        <dbReference type="ChEBI" id="CHEBI:57841"/>
        <dbReference type="ChEBI" id="CHEBI:62899"/>
        <dbReference type="EC" id="2.5.1.3"/>
    </reaction>
</comment>
<comment type="catalytic activity">
    <reaction evidence="1">
        <text>2-(2-carboxy-4-methylthiazol-5-yl)ethyl phosphate + 4-amino-2-methyl-5-(diphosphooxymethyl)pyrimidine + 2 H(+) = thiamine phosphate + CO2 + diphosphate</text>
        <dbReference type="Rhea" id="RHEA:47848"/>
        <dbReference type="ChEBI" id="CHEBI:15378"/>
        <dbReference type="ChEBI" id="CHEBI:16526"/>
        <dbReference type="ChEBI" id="CHEBI:33019"/>
        <dbReference type="ChEBI" id="CHEBI:37575"/>
        <dbReference type="ChEBI" id="CHEBI:57841"/>
        <dbReference type="ChEBI" id="CHEBI:62890"/>
        <dbReference type="EC" id="2.5.1.3"/>
    </reaction>
</comment>
<comment type="catalytic activity">
    <reaction evidence="1">
        <text>4-methyl-5-(2-phosphooxyethyl)-thiazole + 4-amino-2-methyl-5-(diphosphooxymethyl)pyrimidine + H(+) = thiamine phosphate + diphosphate</text>
        <dbReference type="Rhea" id="RHEA:22328"/>
        <dbReference type="ChEBI" id="CHEBI:15378"/>
        <dbReference type="ChEBI" id="CHEBI:33019"/>
        <dbReference type="ChEBI" id="CHEBI:37575"/>
        <dbReference type="ChEBI" id="CHEBI:57841"/>
        <dbReference type="ChEBI" id="CHEBI:58296"/>
        <dbReference type="EC" id="2.5.1.3"/>
    </reaction>
</comment>
<comment type="cofactor">
    <cofactor evidence="1">
        <name>Mg(2+)</name>
        <dbReference type="ChEBI" id="CHEBI:18420"/>
    </cofactor>
    <text evidence="1">Binds 1 Mg(2+) ion per subunit.</text>
</comment>
<comment type="pathway">
    <text evidence="1">Cofactor biosynthesis; thiamine diphosphate biosynthesis; thiamine phosphate from 4-amino-2-methyl-5-diphosphomethylpyrimidine and 4-methyl-5-(2-phosphoethyl)-thiazole: step 1/1.</text>
</comment>
<comment type="similarity">
    <text evidence="1">Belongs to the thiamine-phosphate synthase family.</text>
</comment>
<protein>
    <recommendedName>
        <fullName evidence="1">Thiamine-phosphate synthase</fullName>
        <shortName evidence="1">TP synthase</shortName>
        <shortName evidence="1">TPS</shortName>
        <ecNumber evidence="1">2.5.1.3</ecNumber>
    </recommendedName>
    <alternativeName>
        <fullName evidence="1">Thiamine-phosphate pyrophosphorylase</fullName>
        <shortName evidence="1">TMP pyrophosphorylase</shortName>
        <shortName evidence="1">TMP-PPase</shortName>
    </alternativeName>
</protein>
<organism>
    <name type="scientific">Chlorobium luteolum (strain DSM 273 / BCRC 81028 / 2530)</name>
    <name type="common">Pelodictyon luteolum</name>
    <dbReference type="NCBI Taxonomy" id="319225"/>
    <lineage>
        <taxon>Bacteria</taxon>
        <taxon>Pseudomonadati</taxon>
        <taxon>Chlorobiota</taxon>
        <taxon>Chlorobiia</taxon>
        <taxon>Chlorobiales</taxon>
        <taxon>Chlorobiaceae</taxon>
        <taxon>Chlorobium/Pelodictyon group</taxon>
        <taxon>Pelodictyon</taxon>
    </lineage>
</organism>
<proteinExistence type="inferred from homology"/>
<keyword id="KW-0460">Magnesium</keyword>
<keyword id="KW-0479">Metal-binding</keyword>
<keyword id="KW-1185">Reference proteome</keyword>
<keyword id="KW-0784">Thiamine biosynthesis</keyword>
<keyword id="KW-0808">Transferase</keyword>
<gene>
    <name evidence="1" type="primary">thiE</name>
    <name type="ordered locus">Plut_0958</name>
</gene>
<accession>Q3B4B1</accession>
<reference key="1">
    <citation type="submission" date="2005-08" db="EMBL/GenBank/DDBJ databases">
        <title>Complete sequence of Pelodictyon luteolum DSM 273.</title>
        <authorList>
            <consortium name="US DOE Joint Genome Institute"/>
            <person name="Copeland A."/>
            <person name="Lucas S."/>
            <person name="Lapidus A."/>
            <person name="Barry K."/>
            <person name="Detter J.C."/>
            <person name="Glavina T."/>
            <person name="Hammon N."/>
            <person name="Israni S."/>
            <person name="Pitluck S."/>
            <person name="Bryant D."/>
            <person name="Schmutz J."/>
            <person name="Larimer F."/>
            <person name="Land M."/>
            <person name="Kyrpides N."/>
            <person name="Ivanova N."/>
            <person name="Richardson P."/>
        </authorList>
    </citation>
    <scope>NUCLEOTIDE SEQUENCE [LARGE SCALE GENOMIC DNA]</scope>
    <source>
        <strain>DSM 273 / BCRC 81028 / 2530</strain>
    </source>
</reference>
<sequence length="212" mass="21895">MNSPHSPILCVITDEDTSPLDMVPRALRGGANMIQLRRKTASGRELCRLAEALIPFCRQAGALFIINDRADIALATDADGVHLGQDDLPVAAARQLFGPGKIIGASTSSVDEALKAERNGADYAGFGHIFPTGSKAKGYKPLGPEAISLAAAALRIPLIAIGGITRENAGPLISRGAAGIAVISAVTKAESPEEAARSLMAIMNTTRAGEGT</sequence>
<feature type="chain" id="PRO_1000075572" description="Thiamine-phosphate synthase">
    <location>
        <begin position="1"/>
        <end position="212"/>
    </location>
</feature>
<feature type="binding site" evidence="1">
    <location>
        <begin position="35"/>
        <end position="39"/>
    </location>
    <ligand>
        <name>4-amino-2-methyl-5-(diphosphooxymethyl)pyrimidine</name>
        <dbReference type="ChEBI" id="CHEBI:57841"/>
    </ligand>
</feature>
<feature type="binding site" evidence="1">
    <location>
        <position position="67"/>
    </location>
    <ligand>
        <name>4-amino-2-methyl-5-(diphosphooxymethyl)pyrimidine</name>
        <dbReference type="ChEBI" id="CHEBI:57841"/>
    </ligand>
</feature>
<feature type="binding site" evidence="1">
    <location>
        <position position="68"/>
    </location>
    <ligand>
        <name>Mg(2+)</name>
        <dbReference type="ChEBI" id="CHEBI:18420"/>
    </ligand>
</feature>
<feature type="binding site" evidence="1">
    <location>
        <position position="87"/>
    </location>
    <ligand>
        <name>Mg(2+)</name>
        <dbReference type="ChEBI" id="CHEBI:18420"/>
    </ligand>
</feature>
<feature type="binding site" evidence="1">
    <location>
        <position position="106"/>
    </location>
    <ligand>
        <name>4-amino-2-methyl-5-(diphosphooxymethyl)pyrimidine</name>
        <dbReference type="ChEBI" id="CHEBI:57841"/>
    </ligand>
</feature>
<feature type="binding site" evidence="1">
    <location>
        <begin position="132"/>
        <end position="134"/>
    </location>
    <ligand>
        <name>2-[(2R,5Z)-2-carboxy-4-methylthiazol-5(2H)-ylidene]ethyl phosphate</name>
        <dbReference type="ChEBI" id="CHEBI:62899"/>
    </ligand>
</feature>
<feature type="binding site" evidence="1">
    <location>
        <position position="135"/>
    </location>
    <ligand>
        <name>4-amino-2-methyl-5-(diphosphooxymethyl)pyrimidine</name>
        <dbReference type="ChEBI" id="CHEBI:57841"/>
    </ligand>
</feature>
<feature type="binding site" evidence="1">
    <location>
        <position position="163"/>
    </location>
    <ligand>
        <name>2-[(2R,5Z)-2-carboxy-4-methylthiazol-5(2H)-ylidene]ethyl phosphate</name>
        <dbReference type="ChEBI" id="CHEBI:62899"/>
    </ligand>
</feature>
<feature type="binding site" evidence="1">
    <location>
        <begin position="183"/>
        <end position="184"/>
    </location>
    <ligand>
        <name>2-[(2R,5Z)-2-carboxy-4-methylthiazol-5(2H)-ylidene]ethyl phosphate</name>
        <dbReference type="ChEBI" id="CHEBI:62899"/>
    </ligand>
</feature>
<name>THIE_CHLL3</name>
<dbReference type="EC" id="2.5.1.3" evidence="1"/>
<dbReference type="EMBL" id="CP000096">
    <property type="protein sequence ID" value="ABB23820.1"/>
    <property type="molecule type" value="Genomic_DNA"/>
</dbReference>
<dbReference type="RefSeq" id="WP_011357694.1">
    <property type="nucleotide sequence ID" value="NC_007512.1"/>
</dbReference>
<dbReference type="SMR" id="Q3B4B1"/>
<dbReference type="STRING" id="319225.Plut_0958"/>
<dbReference type="KEGG" id="plt:Plut_0958"/>
<dbReference type="eggNOG" id="COG0352">
    <property type="taxonomic scope" value="Bacteria"/>
</dbReference>
<dbReference type="HOGENOM" id="CLU_018272_3_4_10"/>
<dbReference type="OrthoDB" id="9812206at2"/>
<dbReference type="UniPathway" id="UPA00060">
    <property type="reaction ID" value="UER00141"/>
</dbReference>
<dbReference type="Proteomes" id="UP000002709">
    <property type="component" value="Chromosome"/>
</dbReference>
<dbReference type="GO" id="GO:0005737">
    <property type="term" value="C:cytoplasm"/>
    <property type="evidence" value="ECO:0007669"/>
    <property type="project" value="TreeGrafter"/>
</dbReference>
<dbReference type="GO" id="GO:0000287">
    <property type="term" value="F:magnesium ion binding"/>
    <property type="evidence" value="ECO:0007669"/>
    <property type="project" value="UniProtKB-UniRule"/>
</dbReference>
<dbReference type="GO" id="GO:0004789">
    <property type="term" value="F:thiamine-phosphate diphosphorylase activity"/>
    <property type="evidence" value="ECO:0007669"/>
    <property type="project" value="UniProtKB-UniRule"/>
</dbReference>
<dbReference type="GO" id="GO:0009228">
    <property type="term" value="P:thiamine biosynthetic process"/>
    <property type="evidence" value="ECO:0007669"/>
    <property type="project" value="UniProtKB-KW"/>
</dbReference>
<dbReference type="GO" id="GO:0009229">
    <property type="term" value="P:thiamine diphosphate biosynthetic process"/>
    <property type="evidence" value="ECO:0007669"/>
    <property type="project" value="UniProtKB-UniRule"/>
</dbReference>
<dbReference type="CDD" id="cd00564">
    <property type="entry name" value="TMP_TenI"/>
    <property type="match status" value="1"/>
</dbReference>
<dbReference type="FunFam" id="3.20.20.70:FF:000096">
    <property type="entry name" value="Thiamine-phosphate synthase"/>
    <property type="match status" value="1"/>
</dbReference>
<dbReference type="Gene3D" id="3.20.20.70">
    <property type="entry name" value="Aldolase class I"/>
    <property type="match status" value="1"/>
</dbReference>
<dbReference type="HAMAP" id="MF_00097">
    <property type="entry name" value="TMP_synthase"/>
    <property type="match status" value="1"/>
</dbReference>
<dbReference type="InterPro" id="IPR013785">
    <property type="entry name" value="Aldolase_TIM"/>
</dbReference>
<dbReference type="InterPro" id="IPR036206">
    <property type="entry name" value="ThiamineP_synth_sf"/>
</dbReference>
<dbReference type="InterPro" id="IPR022998">
    <property type="entry name" value="ThiamineP_synth_TenI"/>
</dbReference>
<dbReference type="InterPro" id="IPR034291">
    <property type="entry name" value="TMP_synthase"/>
</dbReference>
<dbReference type="NCBIfam" id="TIGR00693">
    <property type="entry name" value="thiE"/>
    <property type="match status" value="1"/>
</dbReference>
<dbReference type="PANTHER" id="PTHR20857">
    <property type="entry name" value="THIAMINE-PHOSPHATE PYROPHOSPHORYLASE"/>
    <property type="match status" value="1"/>
</dbReference>
<dbReference type="PANTHER" id="PTHR20857:SF15">
    <property type="entry name" value="THIAMINE-PHOSPHATE SYNTHASE"/>
    <property type="match status" value="1"/>
</dbReference>
<dbReference type="Pfam" id="PF02581">
    <property type="entry name" value="TMP-TENI"/>
    <property type="match status" value="1"/>
</dbReference>
<dbReference type="SUPFAM" id="SSF51391">
    <property type="entry name" value="Thiamin phosphate synthase"/>
    <property type="match status" value="1"/>
</dbReference>